<keyword id="KW-0002">3D-structure</keyword>
<keyword id="KW-0007">Acetylation</keyword>
<keyword id="KW-0158">Chromosome</keyword>
<keyword id="KW-0238">DNA-binding</keyword>
<keyword id="KW-1017">Isopeptide bond</keyword>
<keyword id="KW-0488">Methylation</keyword>
<keyword id="KW-0544">Nucleosome core</keyword>
<keyword id="KW-0539">Nucleus</keyword>
<keyword id="KW-1185">Reference proteome</keyword>
<keyword id="KW-0832">Ubl conjugation</keyword>
<proteinExistence type="evidence at protein level"/>
<dbReference type="EMBL" id="Y07745">
    <property type="protein sequence ID" value="CAA69025.1"/>
    <property type="molecule type" value="mRNA"/>
</dbReference>
<dbReference type="EMBL" id="AB005243">
    <property type="protein sequence ID" value="BAB10609.1"/>
    <property type="molecule type" value="Genomic_DNA"/>
</dbReference>
<dbReference type="EMBL" id="CP002688">
    <property type="protein sequence ID" value="AED93093.1"/>
    <property type="molecule type" value="Genomic_DNA"/>
</dbReference>
<dbReference type="PDB" id="8KCB">
    <property type="method" value="EM"/>
    <property type="resolution" value="3.17 A"/>
    <property type="chains" value="C/D=1-145"/>
</dbReference>
<dbReference type="PDB" id="8KCC">
    <property type="method" value="EM"/>
    <property type="resolution" value="3.10 A"/>
    <property type="chains" value="C/D=1-145"/>
</dbReference>
<dbReference type="PDBsum" id="8KCB"/>
<dbReference type="PDBsum" id="8KCC"/>
<dbReference type="EMDB" id="EMD-37098"/>
<dbReference type="EMDB" id="EMD-37099"/>
<dbReference type="SMR" id="Q9FFC0"/>
<dbReference type="BioGRID" id="17627">
    <property type="interactions" value="5"/>
</dbReference>
<dbReference type="FunCoup" id="Q9FFC0">
    <property type="interactions" value="1641"/>
</dbReference>
<dbReference type="STRING" id="3702.Q9FFC0"/>
<dbReference type="iPTMnet" id="Q9FFC0"/>
<dbReference type="PaxDb" id="3702-AT5G22880.1"/>
<dbReference type="ProteomicsDB" id="222370"/>
<dbReference type="EnsemblPlants" id="AT5G22880.1">
    <property type="protein sequence ID" value="AT5G22880.1"/>
    <property type="gene ID" value="AT5G22880"/>
</dbReference>
<dbReference type="GeneID" id="832352"/>
<dbReference type="Gramene" id="AT5G22880.1">
    <property type="protein sequence ID" value="AT5G22880.1"/>
    <property type="gene ID" value="AT5G22880"/>
</dbReference>
<dbReference type="KEGG" id="ath:AT5G22880"/>
<dbReference type="Araport" id="AT5G22880"/>
<dbReference type="TAIR" id="AT5G22880">
    <property type="gene designation" value="HTB2"/>
</dbReference>
<dbReference type="eggNOG" id="KOG1744">
    <property type="taxonomic scope" value="Eukaryota"/>
</dbReference>
<dbReference type="HOGENOM" id="CLU_075666_1_0_1"/>
<dbReference type="InParanoid" id="Q9FFC0"/>
<dbReference type="OMA" id="ELAKHAX"/>
<dbReference type="PhylomeDB" id="Q9FFC0"/>
<dbReference type="CD-CODE" id="4299E36E">
    <property type="entry name" value="Nucleolus"/>
</dbReference>
<dbReference type="PRO" id="PR:Q9FFC0"/>
<dbReference type="Proteomes" id="UP000006548">
    <property type="component" value="Chromosome 5"/>
</dbReference>
<dbReference type="ExpressionAtlas" id="Q9FFC0">
    <property type="expression patterns" value="baseline and differential"/>
</dbReference>
<dbReference type="GO" id="GO:0005730">
    <property type="term" value="C:nucleolus"/>
    <property type="evidence" value="ECO:0007005"/>
    <property type="project" value="TAIR"/>
</dbReference>
<dbReference type="GO" id="GO:0000786">
    <property type="term" value="C:nucleosome"/>
    <property type="evidence" value="ECO:0007669"/>
    <property type="project" value="UniProtKB-KW"/>
</dbReference>
<dbReference type="GO" id="GO:0005634">
    <property type="term" value="C:nucleus"/>
    <property type="evidence" value="ECO:0000314"/>
    <property type="project" value="TAIR"/>
</dbReference>
<dbReference type="GO" id="GO:0009536">
    <property type="term" value="C:plastid"/>
    <property type="evidence" value="ECO:0007005"/>
    <property type="project" value="TAIR"/>
</dbReference>
<dbReference type="GO" id="GO:0003677">
    <property type="term" value="F:DNA binding"/>
    <property type="evidence" value="ECO:0007669"/>
    <property type="project" value="UniProtKB-KW"/>
</dbReference>
<dbReference type="GO" id="GO:0046982">
    <property type="term" value="F:protein heterodimerization activity"/>
    <property type="evidence" value="ECO:0007669"/>
    <property type="project" value="InterPro"/>
</dbReference>
<dbReference type="GO" id="GO:0030527">
    <property type="term" value="F:structural constituent of chromatin"/>
    <property type="evidence" value="ECO:0007669"/>
    <property type="project" value="InterPro"/>
</dbReference>
<dbReference type="CDD" id="cd22910">
    <property type="entry name" value="HFD_H2B"/>
    <property type="match status" value="1"/>
</dbReference>
<dbReference type="FunFam" id="1.10.20.10:FF:000014">
    <property type="entry name" value="Histone H2B"/>
    <property type="match status" value="1"/>
</dbReference>
<dbReference type="Gene3D" id="1.10.20.10">
    <property type="entry name" value="Histone, subunit A"/>
    <property type="match status" value="1"/>
</dbReference>
<dbReference type="InterPro" id="IPR009072">
    <property type="entry name" value="Histone-fold"/>
</dbReference>
<dbReference type="InterPro" id="IPR007125">
    <property type="entry name" value="Histone_H2A/H2B/H3"/>
</dbReference>
<dbReference type="InterPro" id="IPR000558">
    <property type="entry name" value="Histone_H2B"/>
</dbReference>
<dbReference type="InterPro" id="IPR055333">
    <property type="entry name" value="HISTONE_H2B_site"/>
</dbReference>
<dbReference type="PANTHER" id="PTHR23428">
    <property type="entry name" value="HISTONE H2B"/>
    <property type="match status" value="1"/>
</dbReference>
<dbReference type="Pfam" id="PF00125">
    <property type="entry name" value="Histone"/>
    <property type="match status" value="1"/>
</dbReference>
<dbReference type="PRINTS" id="PR00621">
    <property type="entry name" value="HISTONEH2B"/>
</dbReference>
<dbReference type="SMART" id="SM00427">
    <property type="entry name" value="H2B"/>
    <property type="match status" value="1"/>
</dbReference>
<dbReference type="SUPFAM" id="SSF47113">
    <property type="entry name" value="Histone-fold"/>
    <property type="match status" value="1"/>
</dbReference>
<dbReference type="PROSITE" id="PS00357">
    <property type="entry name" value="HISTONE_H2B"/>
    <property type="match status" value="1"/>
</dbReference>
<feature type="chain" id="PRO_0000238697" description="Histone H2B.10">
    <location>
        <begin position="1"/>
        <end position="145"/>
    </location>
</feature>
<feature type="region of interest" description="Disordered" evidence="4">
    <location>
        <begin position="1"/>
        <end position="53"/>
    </location>
</feature>
<feature type="compositionally biased region" description="Basic and acidic residues" evidence="4">
    <location>
        <begin position="1"/>
        <end position="15"/>
    </location>
</feature>
<feature type="compositionally biased region" description="Low complexity" evidence="4">
    <location>
        <begin position="16"/>
        <end position="25"/>
    </location>
</feature>
<feature type="modified residue" description="N6-methyllysine" evidence="3">
    <location>
        <position position="3"/>
    </location>
</feature>
<feature type="modified residue" description="N6-acetyllysine" evidence="6">
    <location>
        <position position="6"/>
    </location>
</feature>
<feature type="modified residue" description="N6-acetyllysine" evidence="6">
    <location>
        <position position="11"/>
    </location>
</feature>
<feature type="modified residue" description="N6,N6-dimethyllysine" evidence="6">
    <location>
        <position position="12"/>
    </location>
</feature>
<feature type="modified residue" description="N6-acetyllysine" evidence="6">
    <location>
        <position position="16"/>
    </location>
</feature>
<feature type="modified residue" description="N6-acetyllysine" evidence="6">
    <location>
        <position position="28"/>
    </location>
</feature>
<feature type="modified residue" description="N6-acetyllysine" evidence="6">
    <location>
        <position position="34"/>
    </location>
</feature>
<feature type="modified residue" description="N6-acetyllysine; partial" evidence="6">
    <location>
        <position position="35"/>
    </location>
</feature>
<feature type="cross-link" description="Glycyl lysine isopeptide (Lys-Gly) (interchain with G-Cter in ubiquitin)" evidence="2">
    <location>
        <position position="141"/>
    </location>
</feature>
<feature type="sequence conflict" description="In Ref. 1; CAA69025." evidence="7" ref="1">
    <original>K</original>
    <variation>E</variation>
    <location>
        <position position="38"/>
    </location>
</feature>
<feature type="helix" evidence="8">
    <location>
        <begin position="59"/>
        <end position="69"/>
    </location>
</feature>
<feature type="helix" evidence="8">
    <location>
        <begin position="77"/>
        <end position="104"/>
    </location>
</feature>
<feature type="strand" evidence="8">
    <location>
        <begin position="108"/>
        <end position="110"/>
    </location>
</feature>
<feature type="helix" evidence="8">
    <location>
        <begin position="112"/>
        <end position="122"/>
    </location>
</feature>
<feature type="helix" evidence="8">
    <location>
        <begin position="126"/>
        <end position="144"/>
    </location>
</feature>
<reference key="1">
    <citation type="submission" date="1996-07" db="EMBL/GenBank/DDBJ databases">
        <authorList>
            <person name="Phillips G."/>
        </authorList>
    </citation>
    <scope>NUCLEOTIDE SEQUENCE [MRNA]</scope>
    <source>
        <strain>cv. Columbia</strain>
    </source>
</reference>
<reference key="2">
    <citation type="journal article" date="1997" name="DNA Res.">
        <title>Structural analysis of Arabidopsis thaliana chromosome 5. I. Sequence features of the 1.6 Mb regions covered by twenty physically assigned P1 clones.</title>
        <authorList>
            <person name="Sato S."/>
            <person name="Kotani H."/>
            <person name="Nakamura Y."/>
            <person name="Kaneko T."/>
            <person name="Asamizu E."/>
            <person name="Fukami M."/>
            <person name="Miyajima N."/>
            <person name="Tabata S."/>
        </authorList>
    </citation>
    <scope>NUCLEOTIDE SEQUENCE [LARGE SCALE GENOMIC DNA]</scope>
    <source>
        <strain>cv. Columbia</strain>
    </source>
</reference>
<reference key="3">
    <citation type="journal article" date="2017" name="Plant J.">
        <title>Araport11: a complete reannotation of the Arabidopsis thaliana reference genome.</title>
        <authorList>
            <person name="Cheng C.Y."/>
            <person name="Krishnakumar V."/>
            <person name="Chan A.P."/>
            <person name="Thibaud-Nissen F."/>
            <person name="Schobel S."/>
            <person name="Town C.D."/>
        </authorList>
    </citation>
    <scope>GENOME REANNOTATION</scope>
    <source>
        <strain>cv. Columbia</strain>
    </source>
</reference>
<reference key="4">
    <citation type="journal article" date="2007" name="Genes Dev.">
        <title>VIM1, a methylcytosine-binding protein required for centromeric heterochromatinization.</title>
        <authorList>
            <person name="Woo H.R."/>
            <person name="Pontes O."/>
            <person name="Pikaard C.S."/>
            <person name="Richards E.J."/>
        </authorList>
    </citation>
    <scope>INTERACTION WITH ORTH2</scope>
</reference>
<reference key="5">
    <citation type="journal article" date="2007" name="Nature">
        <title>Control of DNA methylation and heterochromatic silencing by histone H2B deubiquitination.</title>
        <authorList>
            <person name="Sridhar V.V."/>
            <person name="Kapoor A."/>
            <person name="Zhang K."/>
            <person name="Zhu J."/>
            <person name="Zhou T."/>
            <person name="Hasegawa P.M."/>
            <person name="Bressan R.A."/>
            <person name="Zhu J.-K."/>
        </authorList>
    </citation>
    <scope>UBIQUITINATION AT LYS-141</scope>
    <scope>IDENTIFICATION BY MASS SPECTROMETRY</scope>
</reference>
<reference key="6">
    <citation type="journal article" date="2007" name="J. Proteome Res.">
        <title>Characterization of post-translational modifications of histone H2B-variants isolated from Arabidopsis thaliana.</title>
        <authorList>
            <person name="Bergmueller E."/>
            <person name="Gehrig P.M."/>
            <person name="Gruissem W."/>
        </authorList>
    </citation>
    <scope>ACETYLATION AT LYS-6; LYS-11; LYS-16; LYS-28; LYS-34 AND LYS-35</scope>
    <scope>METHYLATION AT LYS-12</scope>
    <scope>IDENTIFICATION BY MASS SPECTROMETRY</scope>
</reference>
<accession>Q9FFC0</accession>
<accession>Q96516</accession>
<protein>
    <recommendedName>
        <fullName>Histone H2B.10</fullName>
    </recommendedName>
    <alternativeName>
        <fullName>HTB2</fullName>
    </alternativeName>
</protein>
<evidence type="ECO:0000250" key="1"/>
<evidence type="ECO:0000250" key="2">
    <source>
        <dbReference type="UniProtKB" id="Q9LQQ4"/>
    </source>
</evidence>
<evidence type="ECO:0000250" key="3">
    <source>
        <dbReference type="UniProtKB" id="Q9LZT0"/>
    </source>
</evidence>
<evidence type="ECO:0000256" key="4">
    <source>
        <dbReference type="SAM" id="MobiDB-lite"/>
    </source>
</evidence>
<evidence type="ECO:0000269" key="5">
    <source>
    </source>
</evidence>
<evidence type="ECO:0000269" key="6">
    <source>
    </source>
</evidence>
<evidence type="ECO:0000305" key="7"/>
<evidence type="ECO:0007829" key="8">
    <source>
        <dbReference type="PDB" id="8KCC"/>
    </source>
</evidence>
<comment type="function">
    <text>Core component of nucleosome. Nucleosomes wrap and compact DNA into chromatin, limiting DNA accessibility to the cellular machineries which require DNA as a template. Histones thereby play a central role in transcription regulation, DNA repair, DNA replication and chromosomal stability. DNA accessibility is regulated via a complex set of post-translational modifications of histones, also called histone code, and nucleosome remodeling.</text>
</comment>
<comment type="subunit">
    <text evidence="5">The nucleosome is a histone octamer containing two molecules each of H2A, H2B, H3 and H4 assembled in one H3-H4 heterotetramer and two H2A-H2B heterodimers. The octamer wraps approximately 147 bp of DNA. Interacts with ORTH2.</text>
</comment>
<comment type="subcellular location">
    <subcellularLocation>
        <location evidence="1">Nucleus</location>
    </subcellularLocation>
    <subcellularLocation>
        <location evidence="1">Chromosome</location>
    </subcellularLocation>
</comment>
<comment type="PTM">
    <text evidence="6">Can be acetylated to form H2BK5ac, H2BK10ac, H2BK15ac, H2BK27ac, H2BK33ac and H2BK34ac.</text>
</comment>
<comment type="PTM">
    <text>Dimethylated to form H2BK11me2.</text>
</comment>
<comment type="PTM">
    <text>Monoubiquitinated by BRE1 to form H2BK143ub1 and deubiquitinated by UBP26. Required for heterochromatic histone H3 di- and trimethylation at H3K4me. May give a specific tag for epigenetic transcriptional activation.</text>
</comment>
<comment type="similarity">
    <text evidence="7">Belongs to the histone H2B family.</text>
</comment>
<comment type="caution">
    <text evidence="7">To ensure consistency between histone entries, we follow the 'Brno' nomenclature for histone modifications, with positions referring to those used in the literature for the 'closest' model organism. Due to slight variations in histone sequences between organisms and to the presence of initiator methionine in UniProtKB/Swiss-Prot sequences, the actual positions of modified amino acids in the sequence generally differ. In this entry the following conventions are used: H2BK6ac = acetylated Lys-6; H2BK11ac = acetylated Lys-11; H2BK12me2 = dimethylated Lys-12; H2BK16ac = acetylated Lys-16; H2BK27ac = acetylated Lys-28; H2BK33ac = acetylated Lys-34; H2BK34ac = acetylated Lys-35; H2BK143ub1 = monoubiquitinated Lys-141.</text>
</comment>
<name>H2B10_ARATH</name>
<gene>
    <name type="ordered locus">At5g22880</name>
    <name type="ORF">MRN17.11</name>
</gene>
<organism>
    <name type="scientific">Arabidopsis thaliana</name>
    <name type="common">Mouse-ear cress</name>
    <dbReference type="NCBI Taxonomy" id="3702"/>
    <lineage>
        <taxon>Eukaryota</taxon>
        <taxon>Viridiplantae</taxon>
        <taxon>Streptophyta</taxon>
        <taxon>Embryophyta</taxon>
        <taxon>Tracheophyta</taxon>
        <taxon>Spermatophyta</taxon>
        <taxon>Magnoliopsida</taxon>
        <taxon>eudicotyledons</taxon>
        <taxon>Gunneridae</taxon>
        <taxon>Pentapetalae</taxon>
        <taxon>rosids</taxon>
        <taxon>malvids</taxon>
        <taxon>Brassicales</taxon>
        <taxon>Brassicaceae</taxon>
        <taxon>Camelineae</taxon>
        <taxon>Arabidopsis</taxon>
    </lineage>
</organism>
<sequence length="145" mass="15732">MAKADKKPAEKKPAEKTPAAEPAAAAEKKPKAGKKLPKEPAGAGDKKKKRSKKNVETYKIYIFKVLKQVHPDIGISSKAMGIMNSFINDIFEKLAGESSKLARYNKKPTITSREIQTAVRLVLPGELAKHAVSEGTKAVTKFTSS</sequence>